<protein>
    <recommendedName>
        <fullName>Geranylgeranyl pyrophosphate synthase</fullName>
        <shortName>GGPP synthase</shortName>
        <shortName>GGPPSase</shortName>
        <ecNumber>2.5.1.-</ecNumber>
    </recommendedName>
    <alternativeName>
        <fullName>(2E,6E)-farnesyl diphosphate synthase</fullName>
    </alternativeName>
    <alternativeName>
        <fullName>Dimethylallyltranstransferase</fullName>
        <ecNumber>2.5.1.1</ecNumber>
    </alternativeName>
    <alternativeName>
        <fullName>Farnesyl diphosphate synthase</fullName>
    </alternativeName>
    <alternativeName>
        <fullName>Farnesyltranstransferase</fullName>
        <ecNumber>2.5.1.29</ecNumber>
    </alternativeName>
    <alternativeName>
        <fullName>Geranylgeranyl diphosphate synthase</fullName>
    </alternativeName>
    <alternativeName>
        <fullName>Geranyltranstransferase</fullName>
        <ecNumber>2.5.1.10</ecNumber>
    </alternativeName>
</protein>
<proteinExistence type="inferred from homology"/>
<dbReference type="EC" id="2.5.1.-"/>
<dbReference type="EC" id="2.5.1.1"/>
<dbReference type="EC" id="2.5.1.29"/>
<dbReference type="EC" id="2.5.1.10"/>
<dbReference type="EMBL" id="X96943">
    <property type="protein sequence ID" value="CAA65644.1"/>
    <property type="molecule type" value="Genomic_DNA"/>
</dbReference>
<dbReference type="SMR" id="Q92236"/>
<dbReference type="eggNOG" id="KOG0777">
    <property type="taxonomic scope" value="Eukaryota"/>
</dbReference>
<dbReference type="UniPathway" id="UPA00259">
    <property type="reaction ID" value="UER00368"/>
</dbReference>
<dbReference type="UniPathway" id="UPA00260">
    <property type="reaction ID" value="UER00369"/>
</dbReference>
<dbReference type="UniPathway" id="UPA00389">
    <property type="reaction ID" value="UER00564"/>
</dbReference>
<dbReference type="GO" id="GO:0005737">
    <property type="term" value="C:cytoplasm"/>
    <property type="evidence" value="ECO:0007669"/>
    <property type="project" value="UniProtKB-SubCell"/>
</dbReference>
<dbReference type="GO" id="GO:0004337">
    <property type="term" value="F:(2E,6E)-farnesyl diphosphate synthase activity"/>
    <property type="evidence" value="ECO:0007669"/>
    <property type="project" value="UniProtKB-EC"/>
</dbReference>
<dbReference type="GO" id="GO:0004161">
    <property type="term" value="F:dimethylallyltranstransferase activity"/>
    <property type="evidence" value="ECO:0007669"/>
    <property type="project" value="UniProtKB-EC"/>
</dbReference>
<dbReference type="GO" id="GO:0004311">
    <property type="term" value="F:geranylgeranyl diphosphate synthase activity"/>
    <property type="evidence" value="ECO:0007669"/>
    <property type="project" value="UniProtKB-EC"/>
</dbReference>
<dbReference type="GO" id="GO:0046872">
    <property type="term" value="F:metal ion binding"/>
    <property type="evidence" value="ECO:0007669"/>
    <property type="project" value="UniProtKB-KW"/>
</dbReference>
<dbReference type="GO" id="GO:0046165">
    <property type="term" value="P:alcohol biosynthetic process"/>
    <property type="evidence" value="ECO:0007669"/>
    <property type="project" value="UniProtKB-ARBA"/>
</dbReference>
<dbReference type="GO" id="GO:0045337">
    <property type="term" value="P:farnesyl diphosphate biosynthetic process"/>
    <property type="evidence" value="ECO:0007669"/>
    <property type="project" value="UniProtKB-UniPathway"/>
</dbReference>
<dbReference type="GO" id="GO:0033384">
    <property type="term" value="P:geranyl diphosphate biosynthetic process"/>
    <property type="evidence" value="ECO:0007669"/>
    <property type="project" value="UniProtKB-UniPathway"/>
</dbReference>
<dbReference type="GO" id="GO:0033386">
    <property type="term" value="P:geranylgeranyl diphosphate biosynthetic process"/>
    <property type="evidence" value="ECO:0007669"/>
    <property type="project" value="UniProtKB-UniPathway"/>
</dbReference>
<dbReference type="GO" id="GO:0043386">
    <property type="term" value="P:mycotoxin biosynthetic process"/>
    <property type="evidence" value="ECO:0007669"/>
    <property type="project" value="UniProtKB-ARBA"/>
</dbReference>
<dbReference type="CDD" id="cd00685">
    <property type="entry name" value="Trans_IPPS_HT"/>
    <property type="match status" value="1"/>
</dbReference>
<dbReference type="Gene3D" id="1.10.600.10">
    <property type="entry name" value="Farnesyl Diphosphate Synthase"/>
    <property type="match status" value="1"/>
</dbReference>
<dbReference type="InterPro" id="IPR008949">
    <property type="entry name" value="Isoprenoid_synthase_dom_sf"/>
</dbReference>
<dbReference type="InterPro" id="IPR000092">
    <property type="entry name" value="Polyprenyl_synt"/>
</dbReference>
<dbReference type="InterPro" id="IPR033749">
    <property type="entry name" value="Polyprenyl_synt_CS"/>
</dbReference>
<dbReference type="PANTHER" id="PTHR12001">
    <property type="entry name" value="GERANYLGERANYL PYROPHOSPHATE SYNTHASE"/>
    <property type="match status" value="1"/>
</dbReference>
<dbReference type="PANTHER" id="PTHR12001:SF44">
    <property type="entry name" value="GERANYLGERANYL PYROPHOSPHATE SYNTHASE"/>
    <property type="match status" value="1"/>
</dbReference>
<dbReference type="Pfam" id="PF00348">
    <property type="entry name" value="polyprenyl_synt"/>
    <property type="match status" value="1"/>
</dbReference>
<dbReference type="SFLD" id="SFLDS00005">
    <property type="entry name" value="Isoprenoid_Synthase_Type_I"/>
    <property type="match status" value="1"/>
</dbReference>
<dbReference type="SUPFAM" id="SSF48576">
    <property type="entry name" value="Terpenoid synthases"/>
    <property type="match status" value="1"/>
</dbReference>
<dbReference type="PROSITE" id="PS00723">
    <property type="entry name" value="POLYPRENYL_SYNTHASE_1"/>
    <property type="match status" value="1"/>
</dbReference>
<dbReference type="PROSITE" id="PS00444">
    <property type="entry name" value="POLYPRENYL_SYNTHASE_2"/>
    <property type="match status" value="1"/>
</dbReference>
<sequence length="418" mass="46477">MIPTADPILSFNPEALPPSALHMLSLSPKAMEKMSGISNPLVSPNAIPPRTSSTGIPTSLNATPTKPVLRPVPEGDWLSQKQLSPRAQMSNAGYGVMQAPNPPPDPERYAHEDLEFTAKRSWTDEKENVVRGPYDYVISHPGKDFRAQLIGAFNVWLDVPTSSLEVITRVVGMLHESSLLIDDVQDSSELRRGFPVAHNIFGVAQTINSGNYIYFVALQELHKLNNPELITIFSDELVNLHRGQGMDLFWCDTLTCPTEEDYLEMVGNKTGGLFRLGIKLMAAEANGPSPTDCVPLVNLIGLIFQIRDDYMNLSSKEYSHNKGMCEDLTEGKFSFPVIHSIRTNPTNLQLINILKQKTSDTQIKRYAVAYMESTGSFEYTRKVLSVLIERARKMAEELDQGRGSTKGIQKILDKMAIQ</sequence>
<gene>
    <name type="primary">GGS</name>
    <name type="synonym">GGPPS</name>
</gene>
<keyword id="KW-0963">Cytoplasm</keyword>
<keyword id="KW-0414">Isoprene biosynthesis</keyword>
<keyword id="KW-0460">Magnesium</keyword>
<keyword id="KW-0479">Metal-binding</keyword>
<keyword id="KW-0808">Transferase</keyword>
<name>GGPPS_FUSFU</name>
<comment type="function">
    <text>Catalyzes the trans-addition of the three molecules of IPP onto DMAPP to form geranylgeranyl pyrophosphate.</text>
</comment>
<comment type="catalytic activity">
    <reaction>
        <text>isopentenyl diphosphate + dimethylallyl diphosphate = (2E)-geranyl diphosphate + diphosphate</text>
        <dbReference type="Rhea" id="RHEA:22408"/>
        <dbReference type="ChEBI" id="CHEBI:33019"/>
        <dbReference type="ChEBI" id="CHEBI:57623"/>
        <dbReference type="ChEBI" id="CHEBI:58057"/>
        <dbReference type="ChEBI" id="CHEBI:128769"/>
        <dbReference type="EC" id="2.5.1.1"/>
    </reaction>
</comment>
<comment type="catalytic activity">
    <reaction>
        <text>isopentenyl diphosphate + (2E)-geranyl diphosphate = (2E,6E)-farnesyl diphosphate + diphosphate</text>
        <dbReference type="Rhea" id="RHEA:19361"/>
        <dbReference type="ChEBI" id="CHEBI:33019"/>
        <dbReference type="ChEBI" id="CHEBI:58057"/>
        <dbReference type="ChEBI" id="CHEBI:128769"/>
        <dbReference type="ChEBI" id="CHEBI:175763"/>
        <dbReference type="EC" id="2.5.1.10"/>
    </reaction>
</comment>
<comment type="catalytic activity">
    <reaction>
        <text>isopentenyl diphosphate + (2E,6E)-farnesyl diphosphate = (2E,6E,10E)-geranylgeranyl diphosphate + diphosphate</text>
        <dbReference type="Rhea" id="RHEA:17653"/>
        <dbReference type="ChEBI" id="CHEBI:33019"/>
        <dbReference type="ChEBI" id="CHEBI:58756"/>
        <dbReference type="ChEBI" id="CHEBI:128769"/>
        <dbReference type="ChEBI" id="CHEBI:175763"/>
        <dbReference type="EC" id="2.5.1.29"/>
    </reaction>
</comment>
<comment type="cofactor">
    <cofactor evidence="1">
        <name>Mg(2+)</name>
        <dbReference type="ChEBI" id="CHEBI:18420"/>
    </cofactor>
    <text evidence="1">Binds 2 Mg(2+) ions per subunit.</text>
</comment>
<comment type="pathway">
    <text>Isoprenoid biosynthesis; farnesyl diphosphate biosynthesis; farnesyl diphosphate from geranyl diphosphate and isopentenyl diphosphate: step 1/1.</text>
</comment>
<comment type="pathway">
    <text>Isoprenoid biosynthesis; geranyl diphosphate biosynthesis; geranyl diphosphate from dimethylallyl diphosphate and isopentenyl diphosphate: step 1/1.</text>
</comment>
<comment type="pathway">
    <text>Isoprenoid biosynthesis; geranylgeranyl diphosphate biosynthesis; geranylgeranyl diphosphate from farnesyl diphosphate and isopentenyl diphosphate: step 1/1.</text>
</comment>
<comment type="subcellular location">
    <subcellularLocation>
        <location>Cytoplasm</location>
    </subcellularLocation>
</comment>
<comment type="similarity">
    <text evidence="5">Belongs to the FPP/GGPP synthase family.</text>
</comment>
<evidence type="ECO:0000250" key="1"/>
<evidence type="ECO:0000250" key="2">
    <source>
        <dbReference type="UniProtKB" id="P14324"/>
    </source>
</evidence>
<evidence type="ECO:0000250" key="3">
    <source>
        <dbReference type="UniProtKB" id="Q12051"/>
    </source>
</evidence>
<evidence type="ECO:0000256" key="4">
    <source>
        <dbReference type="SAM" id="MobiDB-lite"/>
    </source>
</evidence>
<evidence type="ECO:0000305" key="5"/>
<accession>Q92236</accession>
<feature type="chain" id="PRO_0000123965" description="Geranylgeranyl pyrophosphate synthase">
    <location>
        <begin position="1"/>
        <end position="418"/>
    </location>
</feature>
<feature type="region of interest" description="Disordered" evidence="4">
    <location>
        <begin position="51"/>
        <end position="73"/>
    </location>
</feature>
<feature type="compositionally biased region" description="Polar residues" evidence="4">
    <location>
        <begin position="51"/>
        <end position="64"/>
    </location>
</feature>
<feature type="binding site" evidence="2">
    <location>
        <position position="143"/>
    </location>
    <ligand>
        <name>isopentenyl diphosphate</name>
        <dbReference type="ChEBI" id="CHEBI:128769"/>
    </ligand>
</feature>
<feature type="binding site" evidence="2">
    <location>
        <position position="146"/>
    </location>
    <ligand>
        <name>isopentenyl diphosphate</name>
        <dbReference type="ChEBI" id="CHEBI:128769"/>
    </ligand>
</feature>
<feature type="binding site" evidence="3">
    <location>
        <position position="175"/>
    </location>
    <ligand>
        <name>isopentenyl diphosphate</name>
        <dbReference type="ChEBI" id="CHEBI:128769"/>
    </ligand>
</feature>
<feature type="binding site" evidence="2">
    <location>
        <position position="182"/>
    </location>
    <ligand>
        <name>Mg(2+)</name>
        <dbReference type="ChEBI" id="CHEBI:18420"/>
        <label>1</label>
    </ligand>
</feature>
<feature type="binding site" evidence="2">
    <location>
        <position position="182"/>
    </location>
    <ligand>
        <name>Mg(2+)</name>
        <dbReference type="ChEBI" id="CHEBI:18420"/>
        <label>2</label>
    </ligand>
</feature>
<feature type="binding site" evidence="2">
    <location>
        <position position="186"/>
    </location>
    <ligand>
        <name>Mg(2+)</name>
        <dbReference type="ChEBI" id="CHEBI:18420"/>
        <label>1</label>
    </ligand>
</feature>
<feature type="binding site" evidence="2">
    <location>
        <position position="186"/>
    </location>
    <ligand>
        <name>Mg(2+)</name>
        <dbReference type="ChEBI" id="CHEBI:18420"/>
        <label>2</label>
    </ligand>
</feature>
<feature type="binding site" evidence="1">
    <location>
        <position position="191"/>
    </location>
    <ligand>
        <name>dimethylallyl diphosphate</name>
        <dbReference type="ChEBI" id="CHEBI:57623"/>
    </ligand>
</feature>
<feature type="binding site" evidence="2">
    <location>
        <position position="192"/>
    </location>
    <ligand>
        <name>isopentenyl diphosphate</name>
        <dbReference type="ChEBI" id="CHEBI:128769"/>
    </ligand>
</feature>
<feature type="binding site" evidence="1">
    <location>
        <position position="269"/>
    </location>
    <ligand>
        <name>dimethylallyl diphosphate</name>
        <dbReference type="ChEBI" id="CHEBI:57623"/>
    </ligand>
</feature>
<feature type="binding site" evidence="1">
    <location>
        <position position="270"/>
    </location>
    <ligand>
        <name>dimethylallyl diphosphate</name>
        <dbReference type="ChEBI" id="CHEBI:57623"/>
    </ligand>
</feature>
<feature type="binding site" evidence="1">
    <location>
        <position position="305"/>
    </location>
    <ligand>
        <name>dimethylallyl diphosphate</name>
        <dbReference type="ChEBI" id="CHEBI:57623"/>
    </ligand>
</feature>
<feature type="binding site" evidence="1">
    <location>
        <position position="322"/>
    </location>
    <ligand>
        <name>dimethylallyl diphosphate</name>
        <dbReference type="ChEBI" id="CHEBI:57623"/>
    </ligand>
</feature>
<feature type="binding site" evidence="1">
    <location>
        <position position="332"/>
    </location>
    <ligand>
        <name>dimethylallyl diphosphate</name>
        <dbReference type="ChEBI" id="CHEBI:57623"/>
    </ligand>
</feature>
<feature type="site" description="Important for determining product chain length" evidence="1">
    <location>
        <position position="214"/>
    </location>
</feature>
<organism>
    <name type="scientific">Fusarium fujikuroi</name>
    <name type="common">Bakanae and foot rot disease fungus</name>
    <name type="synonym">Gibberella fujikuroi</name>
    <dbReference type="NCBI Taxonomy" id="5127"/>
    <lineage>
        <taxon>Eukaryota</taxon>
        <taxon>Fungi</taxon>
        <taxon>Dikarya</taxon>
        <taxon>Ascomycota</taxon>
        <taxon>Pezizomycotina</taxon>
        <taxon>Sordariomycetes</taxon>
        <taxon>Hypocreomycetidae</taxon>
        <taxon>Hypocreales</taxon>
        <taxon>Nectriaceae</taxon>
        <taxon>Fusarium</taxon>
        <taxon>Fusarium fujikuroi species complex</taxon>
    </lineage>
</organism>
<reference key="1">
    <citation type="journal article" date="1997" name="Mol. Gen. Genet.">
        <title>The geranylgeranyl diphosphate synthase gene of Gibberella fujikuroi: isolation and expression.</title>
        <authorList>
            <person name="Mende K."/>
            <person name="Homann V."/>
            <person name="Tudzynski B."/>
        </authorList>
    </citation>
    <scope>NUCLEOTIDE SEQUENCE [GENOMIC DNA]</scope>
    <source>
        <strain>m567</strain>
    </source>
</reference>